<feature type="chain" id="PRO_0000122107" description="Serine--tRNA ligase">
    <location>
        <begin position="1"/>
        <end position="426"/>
    </location>
</feature>
<feature type="binding site" evidence="1">
    <location>
        <begin position="229"/>
        <end position="231"/>
    </location>
    <ligand>
        <name>L-serine</name>
        <dbReference type="ChEBI" id="CHEBI:33384"/>
    </ligand>
</feature>
<feature type="binding site" evidence="1">
    <location>
        <begin position="260"/>
        <end position="262"/>
    </location>
    <ligand>
        <name>ATP</name>
        <dbReference type="ChEBI" id="CHEBI:30616"/>
    </ligand>
</feature>
<feature type="binding site" evidence="1">
    <location>
        <position position="276"/>
    </location>
    <ligand>
        <name>ATP</name>
        <dbReference type="ChEBI" id="CHEBI:30616"/>
    </ligand>
</feature>
<feature type="binding site" evidence="1">
    <location>
        <position position="283"/>
    </location>
    <ligand>
        <name>L-serine</name>
        <dbReference type="ChEBI" id="CHEBI:33384"/>
    </ligand>
</feature>
<feature type="binding site" evidence="1">
    <location>
        <begin position="350"/>
        <end position="353"/>
    </location>
    <ligand>
        <name>ATP</name>
        <dbReference type="ChEBI" id="CHEBI:30616"/>
    </ligand>
</feature>
<feature type="binding site" evidence="1">
    <location>
        <position position="386"/>
    </location>
    <ligand>
        <name>L-serine</name>
        <dbReference type="ChEBI" id="CHEBI:33384"/>
    </ligand>
</feature>
<keyword id="KW-0030">Aminoacyl-tRNA synthetase</keyword>
<keyword id="KW-0067">ATP-binding</keyword>
<keyword id="KW-0963">Cytoplasm</keyword>
<keyword id="KW-0436">Ligase</keyword>
<keyword id="KW-0547">Nucleotide-binding</keyword>
<keyword id="KW-0648">Protein biosynthesis</keyword>
<keyword id="KW-1185">Reference proteome</keyword>
<comment type="function">
    <text evidence="1">Catalyzes the attachment of serine to tRNA(Ser). Is also able to aminoacylate tRNA(Sec) with serine, to form the misacylated tRNA L-seryl-tRNA(Sec), which will be further converted into selenocysteinyl-tRNA(Sec).</text>
</comment>
<comment type="catalytic activity">
    <reaction evidence="1">
        <text>tRNA(Ser) + L-serine + ATP = L-seryl-tRNA(Ser) + AMP + diphosphate + H(+)</text>
        <dbReference type="Rhea" id="RHEA:12292"/>
        <dbReference type="Rhea" id="RHEA-COMP:9669"/>
        <dbReference type="Rhea" id="RHEA-COMP:9703"/>
        <dbReference type="ChEBI" id="CHEBI:15378"/>
        <dbReference type="ChEBI" id="CHEBI:30616"/>
        <dbReference type="ChEBI" id="CHEBI:33019"/>
        <dbReference type="ChEBI" id="CHEBI:33384"/>
        <dbReference type="ChEBI" id="CHEBI:78442"/>
        <dbReference type="ChEBI" id="CHEBI:78533"/>
        <dbReference type="ChEBI" id="CHEBI:456215"/>
        <dbReference type="EC" id="6.1.1.11"/>
    </reaction>
</comment>
<comment type="catalytic activity">
    <reaction evidence="1">
        <text>tRNA(Sec) + L-serine + ATP = L-seryl-tRNA(Sec) + AMP + diphosphate + H(+)</text>
        <dbReference type="Rhea" id="RHEA:42580"/>
        <dbReference type="Rhea" id="RHEA-COMP:9742"/>
        <dbReference type="Rhea" id="RHEA-COMP:10128"/>
        <dbReference type="ChEBI" id="CHEBI:15378"/>
        <dbReference type="ChEBI" id="CHEBI:30616"/>
        <dbReference type="ChEBI" id="CHEBI:33019"/>
        <dbReference type="ChEBI" id="CHEBI:33384"/>
        <dbReference type="ChEBI" id="CHEBI:78442"/>
        <dbReference type="ChEBI" id="CHEBI:78533"/>
        <dbReference type="ChEBI" id="CHEBI:456215"/>
        <dbReference type="EC" id="6.1.1.11"/>
    </reaction>
</comment>
<comment type="pathway">
    <text evidence="1">Aminoacyl-tRNA biosynthesis; selenocysteinyl-tRNA(Sec) biosynthesis; L-seryl-tRNA(Sec) from L-serine and tRNA(Sec): step 1/1.</text>
</comment>
<comment type="subunit">
    <text evidence="1">Homodimer. The tRNA molecule binds across the dimer.</text>
</comment>
<comment type="subcellular location">
    <subcellularLocation>
        <location evidence="1">Cytoplasm</location>
    </subcellularLocation>
</comment>
<comment type="domain">
    <text evidence="1">Consists of two distinct domains, a catalytic core and a N-terminal extension that is involved in tRNA binding.</text>
</comment>
<comment type="similarity">
    <text evidence="1">Belongs to the class-II aminoacyl-tRNA synthetase family. Type-1 seryl-tRNA synthetase subfamily.</text>
</comment>
<comment type="sequence caution" evidence="2">
    <conflict type="erroneous initiation">
        <sequence resource="EMBL-CDS" id="CAD71875"/>
    </conflict>
</comment>
<proteinExistence type="inferred from homology"/>
<gene>
    <name evidence="1" type="primary">serS</name>
    <name type="ordered locus">RB1039</name>
</gene>
<organism>
    <name type="scientific">Rhodopirellula baltica (strain DSM 10527 / NCIMB 13988 / SH1)</name>
    <dbReference type="NCBI Taxonomy" id="243090"/>
    <lineage>
        <taxon>Bacteria</taxon>
        <taxon>Pseudomonadati</taxon>
        <taxon>Planctomycetota</taxon>
        <taxon>Planctomycetia</taxon>
        <taxon>Pirellulales</taxon>
        <taxon>Pirellulaceae</taxon>
        <taxon>Rhodopirellula</taxon>
    </lineage>
</organism>
<sequence length="426" mass="46901">MLDRKFILQNAQLVAENSAKRGVSVDVDAICRLEAERMDALKQAEELNRQANEVSKQIKSAKDNDERQELIAKGRSLREQKDAAGAAQDRLEAEILELQTILPNMTHPDVPEGGEHDANEIGRGKTPVPEMDFQPLDHLQLGEKHDLFDFEGGARVAGSGFYFLRNAAVRLDLALQQFAISHLAGKGFTPVSTPDLALTSVLQGTGFNPRGPETQIYSIENTELNLVATAEIPLGGMLSGQILASEELPLRYCGLSHCFRTEAGAAGRASKGLYRVHQFTKVEMFAFTLPDQSTAMHEEMRELECEIFDALEVPYRVIDTATGDLGGPAYRKYDLEAWMPGRGESGDWGEVTSTSNCTDYQARRLNVRSKSNTQKGTDFVHTLNGTAIATGRAMIAILENHQRADGTINVPEILRPWVGCDVLKCE</sequence>
<accession>Q7UXX6</accession>
<reference key="1">
    <citation type="journal article" date="2003" name="Proc. Natl. Acad. Sci. U.S.A.">
        <title>Complete genome sequence of the marine planctomycete Pirellula sp. strain 1.</title>
        <authorList>
            <person name="Gloeckner F.O."/>
            <person name="Kube M."/>
            <person name="Bauer M."/>
            <person name="Teeling H."/>
            <person name="Lombardot T."/>
            <person name="Ludwig W."/>
            <person name="Gade D."/>
            <person name="Beck A."/>
            <person name="Borzym K."/>
            <person name="Heitmann K."/>
            <person name="Rabus R."/>
            <person name="Schlesner H."/>
            <person name="Amann R."/>
            <person name="Reinhardt R."/>
        </authorList>
    </citation>
    <scope>NUCLEOTIDE SEQUENCE [LARGE SCALE GENOMIC DNA]</scope>
    <source>
        <strain>DSM 10527 / NCIMB 13988 / SH1</strain>
    </source>
</reference>
<protein>
    <recommendedName>
        <fullName evidence="1">Serine--tRNA ligase</fullName>
        <ecNumber evidence="1">6.1.1.11</ecNumber>
    </recommendedName>
    <alternativeName>
        <fullName evidence="1">Seryl-tRNA synthetase</fullName>
        <shortName evidence="1">SerRS</shortName>
    </alternativeName>
    <alternativeName>
        <fullName evidence="1">Seryl-tRNA(Ser/Sec) synthetase</fullName>
    </alternativeName>
</protein>
<evidence type="ECO:0000255" key="1">
    <source>
        <dbReference type="HAMAP-Rule" id="MF_00176"/>
    </source>
</evidence>
<evidence type="ECO:0000305" key="2"/>
<name>SYS_RHOBA</name>
<dbReference type="EC" id="6.1.1.11" evidence="1"/>
<dbReference type="EMBL" id="BX294134">
    <property type="protein sequence ID" value="CAD71875.1"/>
    <property type="status" value="ALT_INIT"/>
    <property type="molecule type" value="Genomic_DNA"/>
</dbReference>
<dbReference type="RefSeq" id="NP_864198.2">
    <property type="nucleotide sequence ID" value="NC_005027.1"/>
</dbReference>
<dbReference type="RefSeq" id="WP_011118185.1">
    <property type="nucleotide sequence ID" value="NC_005027.1"/>
</dbReference>
<dbReference type="SMR" id="Q7UXX6"/>
<dbReference type="FunCoup" id="Q7UXX6">
    <property type="interactions" value="524"/>
</dbReference>
<dbReference type="STRING" id="243090.RB1039"/>
<dbReference type="EnsemblBacteria" id="CAD71875">
    <property type="protein sequence ID" value="CAD71875"/>
    <property type="gene ID" value="RB1039"/>
</dbReference>
<dbReference type="KEGG" id="rba:RB1039"/>
<dbReference type="PATRIC" id="fig|243090.15.peg.482"/>
<dbReference type="eggNOG" id="COG0172">
    <property type="taxonomic scope" value="Bacteria"/>
</dbReference>
<dbReference type="HOGENOM" id="CLU_023797_0_1_0"/>
<dbReference type="InParanoid" id="Q7UXX6"/>
<dbReference type="OrthoDB" id="9804647at2"/>
<dbReference type="UniPathway" id="UPA00906">
    <property type="reaction ID" value="UER00895"/>
</dbReference>
<dbReference type="Proteomes" id="UP000001025">
    <property type="component" value="Chromosome"/>
</dbReference>
<dbReference type="GO" id="GO:0005737">
    <property type="term" value="C:cytoplasm"/>
    <property type="evidence" value="ECO:0007669"/>
    <property type="project" value="UniProtKB-SubCell"/>
</dbReference>
<dbReference type="GO" id="GO:0005524">
    <property type="term" value="F:ATP binding"/>
    <property type="evidence" value="ECO:0007669"/>
    <property type="project" value="UniProtKB-UniRule"/>
</dbReference>
<dbReference type="GO" id="GO:0004828">
    <property type="term" value="F:serine-tRNA ligase activity"/>
    <property type="evidence" value="ECO:0000318"/>
    <property type="project" value="GO_Central"/>
</dbReference>
<dbReference type="GO" id="GO:0000049">
    <property type="term" value="F:tRNA binding"/>
    <property type="evidence" value="ECO:0000318"/>
    <property type="project" value="GO_Central"/>
</dbReference>
<dbReference type="GO" id="GO:0016260">
    <property type="term" value="P:selenocysteine biosynthetic process"/>
    <property type="evidence" value="ECO:0007669"/>
    <property type="project" value="UniProtKB-UniRule"/>
</dbReference>
<dbReference type="GO" id="GO:0006434">
    <property type="term" value="P:seryl-tRNA aminoacylation"/>
    <property type="evidence" value="ECO:0000318"/>
    <property type="project" value="GO_Central"/>
</dbReference>
<dbReference type="CDD" id="cd00770">
    <property type="entry name" value="SerRS_core"/>
    <property type="match status" value="1"/>
</dbReference>
<dbReference type="FunFam" id="3.30.930.10:FF:000055">
    <property type="entry name" value="Serine--tRNA ligase"/>
    <property type="match status" value="1"/>
</dbReference>
<dbReference type="Gene3D" id="3.30.930.10">
    <property type="entry name" value="Bira Bifunctional Protein, Domain 2"/>
    <property type="match status" value="1"/>
</dbReference>
<dbReference type="Gene3D" id="1.10.287.40">
    <property type="entry name" value="Serine-tRNA synthetase, tRNA binding domain"/>
    <property type="match status" value="1"/>
</dbReference>
<dbReference type="HAMAP" id="MF_00176">
    <property type="entry name" value="Ser_tRNA_synth_type1"/>
    <property type="match status" value="1"/>
</dbReference>
<dbReference type="InterPro" id="IPR002314">
    <property type="entry name" value="aa-tRNA-synt_IIb"/>
</dbReference>
<dbReference type="InterPro" id="IPR006195">
    <property type="entry name" value="aa-tRNA-synth_II"/>
</dbReference>
<dbReference type="InterPro" id="IPR045864">
    <property type="entry name" value="aa-tRNA-synth_II/BPL/LPL"/>
</dbReference>
<dbReference type="InterPro" id="IPR002317">
    <property type="entry name" value="Ser-tRNA-ligase_type_1"/>
</dbReference>
<dbReference type="InterPro" id="IPR015866">
    <property type="entry name" value="Ser-tRNA-synth_1_N"/>
</dbReference>
<dbReference type="InterPro" id="IPR042103">
    <property type="entry name" value="SerRS_1_N_sf"/>
</dbReference>
<dbReference type="InterPro" id="IPR033729">
    <property type="entry name" value="SerRS_core"/>
</dbReference>
<dbReference type="InterPro" id="IPR010978">
    <property type="entry name" value="tRNA-bd_arm"/>
</dbReference>
<dbReference type="NCBIfam" id="TIGR00414">
    <property type="entry name" value="serS"/>
    <property type="match status" value="1"/>
</dbReference>
<dbReference type="PANTHER" id="PTHR11778">
    <property type="entry name" value="SERYL-TRNA SYNTHETASE"/>
    <property type="match status" value="1"/>
</dbReference>
<dbReference type="Pfam" id="PF02403">
    <property type="entry name" value="Seryl_tRNA_N"/>
    <property type="match status" value="1"/>
</dbReference>
<dbReference type="Pfam" id="PF00587">
    <property type="entry name" value="tRNA-synt_2b"/>
    <property type="match status" value="1"/>
</dbReference>
<dbReference type="PIRSF" id="PIRSF001529">
    <property type="entry name" value="Ser-tRNA-synth_IIa"/>
    <property type="match status" value="1"/>
</dbReference>
<dbReference type="PRINTS" id="PR00981">
    <property type="entry name" value="TRNASYNTHSER"/>
</dbReference>
<dbReference type="SUPFAM" id="SSF55681">
    <property type="entry name" value="Class II aaRS and biotin synthetases"/>
    <property type="match status" value="1"/>
</dbReference>
<dbReference type="SUPFAM" id="SSF46589">
    <property type="entry name" value="tRNA-binding arm"/>
    <property type="match status" value="1"/>
</dbReference>
<dbReference type="PROSITE" id="PS50862">
    <property type="entry name" value="AA_TRNA_LIGASE_II"/>
    <property type="match status" value="1"/>
</dbReference>